<accession>Q7V2Y8</accession>
<feature type="chain" id="PRO_0000174571" description="S-adenosylmethionine synthase">
    <location>
        <begin position="1"/>
        <end position="413"/>
    </location>
</feature>
<feature type="region of interest" description="Flexible loop" evidence="1">
    <location>
        <begin position="100"/>
        <end position="110"/>
    </location>
</feature>
<feature type="binding site" description="in other chain" evidence="1">
    <location>
        <position position="15"/>
    </location>
    <ligand>
        <name>ATP</name>
        <dbReference type="ChEBI" id="CHEBI:30616"/>
        <note>ligand shared between two neighboring subunits</note>
    </ligand>
</feature>
<feature type="binding site" evidence="1">
    <location>
        <position position="17"/>
    </location>
    <ligand>
        <name>Mg(2+)</name>
        <dbReference type="ChEBI" id="CHEBI:18420"/>
    </ligand>
</feature>
<feature type="binding site" evidence="1">
    <location>
        <position position="43"/>
    </location>
    <ligand>
        <name>K(+)</name>
        <dbReference type="ChEBI" id="CHEBI:29103"/>
    </ligand>
</feature>
<feature type="binding site" description="in other chain" evidence="1">
    <location>
        <position position="56"/>
    </location>
    <ligand>
        <name>L-methionine</name>
        <dbReference type="ChEBI" id="CHEBI:57844"/>
        <note>ligand shared between two neighboring subunits</note>
    </ligand>
</feature>
<feature type="binding site" description="in other chain" evidence="1">
    <location>
        <position position="100"/>
    </location>
    <ligand>
        <name>L-methionine</name>
        <dbReference type="ChEBI" id="CHEBI:57844"/>
        <note>ligand shared between two neighboring subunits</note>
    </ligand>
</feature>
<feature type="binding site" description="in other chain" evidence="1">
    <location>
        <begin position="171"/>
        <end position="173"/>
    </location>
    <ligand>
        <name>ATP</name>
        <dbReference type="ChEBI" id="CHEBI:30616"/>
        <note>ligand shared between two neighboring subunits</note>
    </ligand>
</feature>
<feature type="binding site" description="in other chain" evidence="1">
    <location>
        <begin position="248"/>
        <end position="249"/>
    </location>
    <ligand>
        <name>ATP</name>
        <dbReference type="ChEBI" id="CHEBI:30616"/>
        <note>ligand shared between two neighboring subunits</note>
    </ligand>
</feature>
<feature type="binding site" evidence="1">
    <location>
        <position position="257"/>
    </location>
    <ligand>
        <name>ATP</name>
        <dbReference type="ChEBI" id="CHEBI:30616"/>
        <note>ligand shared between two neighboring subunits</note>
    </ligand>
</feature>
<feature type="binding site" evidence="1">
    <location>
        <position position="257"/>
    </location>
    <ligand>
        <name>L-methionine</name>
        <dbReference type="ChEBI" id="CHEBI:57844"/>
        <note>ligand shared between two neighboring subunits</note>
    </ligand>
</feature>
<feature type="binding site" description="in other chain" evidence="1">
    <location>
        <begin position="263"/>
        <end position="264"/>
    </location>
    <ligand>
        <name>ATP</name>
        <dbReference type="ChEBI" id="CHEBI:30616"/>
        <note>ligand shared between two neighboring subunits</note>
    </ligand>
</feature>
<feature type="binding site" evidence="1">
    <location>
        <position position="280"/>
    </location>
    <ligand>
        <name>ATP</name>
        <dbReference type="ChEBI" id="CHEBI:30616"/>
        <note>ligand shared between two neighboring subunits</note>
    </ligand>
</feature>
<feature type="binding site" evidence="1">
    <location>
        <position position="284"/>
    </location>
    <ligand>
        <name>ATP</name>
        <dbReference type="ChEBI" id="CHEBI:30616"/>
        <note>ligand shared between two neighboring subunits</note>
    </ligand>
</feature>
<feature type="binding site" description="in other chain" evidence="1">
    <location>
        <position position="288"/>
    </location>
    <ligand>
        <name>L-methionine</name>
        <dbReference type="ChEBI" id="CHEBI:57844"/>
        <note>ligand shared between two neighboring subunits</note>
    </ligand>
</feature>
<protein>
    <recommendedName>
        <fullName evidence="1">S-adenosylmethionine synthase</fullName>
        <shortName evidence="1">AdoMet synthase</shortName>
        <ecNumber evidence="1">2.5.1.6</ecNumber>
    </recommendedName>
    <alternativeName>
        <fullName evidence="1">MAT</fullName>
    </alternativeName>
    <alternativeName>
        <fullName evidence="1">Methionine adenosyltransferase</fullName>
    </alternativeName>
</protein>
<organism>
    <name type="scientific">Prochlorococcus marinus subsp. pastoris (strain CCMP1986 / NIES-2087 / MED4)</name>
    <dbReference type="NCBI Taxonomy" id="59919"/>
    <lineage>
        <taxon>Bacteria</taxon>
        <taxon>Bacillati</taxon>
        <taxon>Cyanobacteriota</taxon>
        <taxon>Cyanophyceae</taxon>
        <taxon>Synechococcales</taxon>
        <taxon>Prochlorococcaceae</taxon>
        <taxon>Prochlorococcus</taxon>
    </lineage>
</organism>
<sequence>MSDFIFTSESVTEGHPDKICDQISDAVLDALLSEDPESRVACETVVNTGLCLLTGEITSRAKLDYIKLVRKVIKEIGYEGSKAGGFDSNSCAVLVALDEQSPDISQGVNEADDINEDLENNTGAGDQGIMFGYACDETPELMPLPISLAHRLAIQLAKVRHEKVLDYLLPDGKTQVSIDYKKGVPVSINTILISTQHTAEIDGITNEEEIRQKIKEDLWINVVLPATEDLEIKPSNQKTRFLVNPTGKFVVGGPQGDAGLTGRKIIVDTYGGYARHGGGAFSGKDPTKVDRSAAYAARYVAKSIVKAKLAKKAEVQLSYAIGVAKPISILVETFGTGIISQDNLKELIKNNFDLRPAAIIKEFDLRNLPKKMGGEFFRKTASYGHFGRNDLNLPWERVEEKSAQLVEASKILL</sequence>
<comment type="function">
    <text evidence="1">Catalyzes the formation of S-adenosylmethionine (AdoMet) from methionine and ATP. The overall synthetic reaction is composed of two sequential steps, AdoMet formation and the subsequent tripolyphosphate hydrolysis which occurs prior to release of AdoMet from the enzyme.</text>
</comment>
<comment type="catalytic activity">
    <reaction evidence="1">
        <text>L-methionine + ATP + H2O = S-adenosyl-L-methionine + phosphate + diphosphate</text>
        <dbReference type="Rhea" id="RHEA:21080"/>
        <dbReference type="ChEBI" id="CHEBI:15377"/>
        <dbReference type="ChEBI" id="CHEBI:30616"/>
        <dbReference type="ChEBI" id="CHEBI:33019"/>
        <dbReference type="ChEBI" id="CHEBI:43474"/>
        <dbReference type="ChEBI" id="CHEBI:57844"/>
        <dbReference type="ChEBI" id="CHEBI:59789"/>
        <dbReference type="EC" id="2.5.1.6"/>
    </reaction>
</comment>
<comment type="cofactor">
    <cofactor evidence="1">
        <name>Mg(2+)</name>
        <dbReference type="ChEBI" id="CHEBI:18420"/>
    </cofactor>
    <text evidence="1">Binds 2 divalent ions per subunit.</text>
</comment>
<comment type="cofactor">
    <cofactor evidence="1">
        <name>K(+)</name>
        <dbReference type="ChEBI" id="CHEBI:29103"/>
    </cofactor>
    <text evidence="1">Binds 1 potassium ion per subunit.</text>
</comment>
<comment type="pathway">
    <text evidence="1">Amino-acid biosynthesis; S-adenosyl-L-methionine biosynthesis; S-adenosyl-L-methionine from L-methionine: step 1/1.</text>
</comment>
<comment type="subunit">
    <text evidence="1">Homotetramer; dimer of dimers.</text>
</comment>
<comment type="subcellular location">
    <subcellularLocation>
        <location evidence="1">Cytoplasm</location>
    </subcellularLocation>
</comment>
<comment type="similarity">
    <text evidence="1">Belongs to the AdoMet synthase family.</text>
</comment>
<name>METK_PROMP</name>
<proteinExistence type="inferred from homology"/>
<gene>
    <name evidence="1" type="primary">metK</name>
    <name type="ordered locus">PMM0311</name>
</gene>
<keyword id="KW-0067">ATP-binding</keyword>
<keyword id="KW-0963">Cytoplasm</keyword>
<keyword id="KW-0460">Magnesium</keyword>
<keyword id="KW-0479">Metal-binding</keyword>
<keyword id="KW-0547">Nucleotide-binding</keyword>
<keyword id="KW-0554">One-carbon metabolism</keyword>
<keyword id="KW-0630">Potassium</keyword>
<keyword id="KW-0808">Transferase</keyword>
<evidence type="ECO:0000255" key="1">
    <source>
        <dbReference type="HAMAP-Rule" id="MF_00086"/>
    </source>
</evidence>
<reference key="1">
    <citation type="journal article" date="2003" name="Nature">
        <title>Genome divergence in two Prochlorococcus ecotypes reflects oceanic niche differentiation.</title>
        <authorList>
            <person name="Rocap G."/>
            <person name="Larimer F.W."/>
            <person name="Lamerdin J.E."/>
            <person name="Malfatti S."/>
            <person name="Chain P."/>
            <person name="Ahlgren N.A."/>
            <person name="Arellano A."/>
            <person name="Coleman M."/>
            <person name="Hauser L."/>
            <person name="Hess W.R."/>
            <person name="Johnson Z.I."/>
            <person name="Land M.L."/>
            <person name="Lindell D."/>
            <person name="Post A.F."/>
            <person name="Regala W."/>
            <person name="Shah M."/>
            <person name="Shaw S.L."/>
            <person name="Steglich C."/>
            <person name="Sullivan M.B."/>
            <person name="Ting C.S."/>
            <person name="Tolonen A."/>
            <person name="Webb E.A."/>
            <person name="Zinser E.R."/>
            <person name="Chisholm S.W."/>
        </authorList>
    </citation>
    <scope>NUCLEOTIDE SEQUENCE [LARGE SCALE GENOMIC DNA]</scope>
    <source>
        <strain>CCMP1986 / NIES-2087 / MED4</strain>
    </source>
</reference>
<dbReference type="EC" id="2.5.1.6" evidence="1"/>
<dbReference type="EMBL" id="BX548174">
    <property type="protein sequence ID" value="CAE18770.1"/>
    <property type="molecule type" value="Genomic_DNA"/>
</dbReference>
<dbReference type="RefSeq" id="WP_011131948.1">
    <property type="nucleotide sequence ID" value="NC_005072.1"/>
</dbReference>
<dbReference type="SMR" id="Q7V2Y8"/>
<dbReference type="STRING" id="59919.PMM0311"/>
<dbReference type="KEGG" id="pmm:PMM0311"/>
<dbReference type="eggNOG" id="COG0192">
    <property type="taxonomic scope" value="Bacteria"/>
</dbReference>
<dbReference type="HOGENOM" id="CLU_041802_1_1_3"/>
<dbReference type="OrthoDB" id="9801686at2"/>
<dbReference type="UniPathway" id="UPA00315">
    <property type="reaction ID" value="UER00080"/>
</dbReference>
<dbReference type="Proteomes" id="UP000001026">
    <property type="component" value="Chromosome"/>
</dbReference>
<dbReference type="GO" id="GO:0005737">
    <property type="term" value="C:cytoplasm"/>
    <property type="evidence" value="ECO:0007669"/>
    <property type="project" value="UniProtKB-SubCell"/>
</dbReference>
<dbReference type="GO" id="GO:0005524">
    <property type="term" value="F:ATP binding"/>
    <property type="evidence" value="ECO:0007669"/>
    <property type="project" value="UniProtKB-UniRule"/>
</dbReference>
<dbReference type="GO" id="GO:0000287">
    <property type="term" value="F:magnesium ion binding"/>
    <property type="evidence" value="ECO:0007669"/>
    <property type="project" value="UniProtKB-UniRule"/>
</dbReference>
<dbReference type="GO" id="GO:0004478">
    <property type="term" value="F:methionine adenosyltransferase activity"/>
    <property type="evidence" value="ECO:0007669"/>
    <property type="project" value="UniProtKB-UniRule"/>
</dbReference>
<dbReference type="GO" id="GO:0006730">
    <property type="term" value="P:one-carbon metabolic process"/>
    <property type="evidence" value="ECO:0007669"/>
    <property type="project" value="UniProtKB-KW"/>
</dbReference>
<dbReference type="GO" id="GO:0006556">
    <property type="term" value="P:S-adenosylmethionine biosynthetic process"/>
    <property type="evidence" value="ECO:0007669"/>
    <property type="project" value="UniProtKB-UniRule"/>
</dbReference>
<dbReference type="CDD" id="cd18079">
    <property type="entry name" value="S-AdoMet_synt"/>
    <property type="match status" value="1"/>
</dbReference>
<dbReference type="FunFam" id="3.30.300.10:FF:000003">
    <property type="entry name" value="S-adenosylmethionine synthase"/>
    <property type="match status" value="1"/>
</dbReference>
<dbReference type="Gene3D" id="3.30.300.10">
    <property type="match status" value="3"/>
</dbReference>
<dbReference type="HAMAP" id="MF_00086">
    <property type="entry name" value="S_AdoMet_synth1"/>
    <property type="match status" value="1"/>
</dbReference>
<dbReference type="InterPro" id="IPR022631">
    <property type="entry name" value="ADOMET_SYNTHASE_CS"/>
</dbReference>
<dbReference type="InterPro" id="IPR022630">
    <property type="entry name" value="S-AdoMet_synt_C"/>
</dbReference>
<dbReference type="InterPro" id="IPR022629">
    <property type="entry name" value="S-AdoMet_synt_central"/>
</dbReference>
<dbReference type="InterPro" id="IPR022628">
    <property type="entry name" value="S-AdoMet_synt_N"/>
</dbReference>
<dbReference type="InterPro" id="IPR002133">
    <property type="entry name" value="S-AdoMet_synthetase"/>
</dbReference>
<dbReference type="InterPro" id="IPR022636">
    <property type="entry name" value="S-AdoMet_synthetase_sfam"/>
</dbReference>
<dbReference type="NCBIfam" id="TIGR01034">
    <property type="entry name" value="metK"/>
    <property type="match status" value="1"/>
</dbReference>
<dbReference type="PANTHER" id="PTHR11964">
    <property type="entry name" value="S-ADENOSYLMETHIONINE SYNTHETASE"/>
    <property type="match status" value="1"/>
</dbReference>
<dbReference type="Pfam" id="PF02773">
    <property type="entry name" value="S-AdoMet_synt_C"/>
    <property type="match status" value="1"/>
</dbReference>
<dbReference type="Pfam" id="PF02772">
    <property type="entry name" value="S-AdoMet_synt_M"/>
    <property type="match status" value="1"/>
</dbReference>
<dbReference type="Pfam" id="PF00438">
    <property type="entry name" value="S-AdoMet_synt_N"/>
    <property type="match status" value="1"/>
</dbReference>
<dbReference type="PIRSF" id="PIRSF000497">
    <property type="entry name" value="MAT"/>
    <property type="match status" value="1"/>
</dbReference>
<dbReference type="SUPFAM" id="SSF55973">
    <property type="entry name" value="S-adenosylmethionine synthetase"/>
    <property type="match status" value="3"/>
</dbReference>
<dbReference type="PROSITE" id="PS00376">
    <property type="entry name" value="ADOMET_SYNTHASE_1"/>
    <property type="match status" value="1"/>
</dbReference>
<dbReference type="PROSITE" id="PS00377">
    <property type="entry name" value="ADOMET_SYNTHASE_2"/>
    <property type="match status" value="1"/>
</dbReference>